<comment type="function">
    <text evidence="3">Sulfur-rich seed storage protein that remains undegraded at germination.</text>
</comment>
<comment type="subunit">
    <text evidence="1 3 11">Two-subunit monomeric unit made of alpha and beta subunits coupled by disulfide bonds (at pH 4.5 and under non-reducing conditions) (By similarity). Can also form oligomers including dimer, tetramer and cyclic hexamer (trimer of dimers) (at pH &gt; 5.5) (By similarity). Component of globulins complexes which accumulate in seeds (Probable). Interacts with flavonoids (e.g. apigenin glucosides) present in globulins complexes (Probable).</text>
</comment>
<comment type="subcellular location">
    <subcellularLocation>
        <location evidence="2">Secreted</location>
        <location evidence="2">Extracellular space</location>
    </subcellularLocation>
</comment>
<comment type="developmental stage">
    <text evidence="6">Accumulates during seed development.</text>
</comment>
<comment type="PTM">
    <text evidence="1">Glycosylated on alpha chain.</text>
</comment>
<comment type="allergen">
    <text evidence="10">Causes an allergic reaction in human.</text>
</comment>
<comment type="biotechnology">
    <text evidence="1">May be used in antidiabetic therapies and diets for type 2 diabetes (T2D).</text>
</comment>
<comment type="miscellaneous">
    <text evidence="1">Capable of reducing glycaemia in mammals.</text>
</comment>
<comment type="miscellaneous">
    <text evidence="7">Resistant to pancreatin-mediated digestion.</text>
</comment>
<comment type="similarity">
    <text evidence="5">Belongs to the peptidase A1 family.</text>
</comment>
<name>CONG2_LUPAN</name>
<protein>
    <recommendedName>
        <fullName evidence="8">Gamma conglutin 2</fullName>
    </recommendedName>
    <allergenName evidence="9">Lup an gamma-conglutin</allergenName>
    <component>
        <recommendedName>
            <fullName evidence="9">Gamma conglutin 2 beta subunit</fullName>
        </recommendedName>
        <alternativeName>
            <fullName evidence="9">Gamma conglutin 2 small subunit</fullName>
        </alternativeName>
    </component>
    <component>
        <recommendedName>
            <fullName evidence="9">Gamma conglutin 2 alpha subunit</fullName>
        </recommendedName>
        <alternativeName>
            <fullName evidence="9">Gamma conglutin 2 large subunit</fullName>
        </alternativeName>
    </component>
</protein>
<evidence type="ECO:0000250" key="1">
    <source>
        <dbReference type="UniProtKB" id="Q42369"/>
    </source>
</evidence>
<evidence type="ECO:0000250" key="2">
    <source>
        <dbReference type="UniProtKB" id="Q9FEX1"/>
    </source>
</evidence>
<evidence type="ECO:0000250" key="3">
    <source>
        <dbReference type="UniProtKB" id="Q9FSH9"/>
    </source>
</evidence>
<evidence type="ECO:0000255" key="4">
    <source>
        <dbReference type="PROSITE-ProRule" id="PRU00498"/>
    </source>
</evidence>
<evidence type="ECO:0000255" key="5">
    <source>
        <dbReference type="PROSITE-ProRule" id="PRU01103"/>
    </source>
</evidence>
<evidence type="ECO:0000269" key="6">
    <source>
    </source>
</evidence>
<evidence type="ECO:0000269" key="7">
    <source>
    </source>
</evidence>
<evidence type="ECO:0000303" key="8">
    <source>
    </source>
</evidence>
<evidence type="ECO:0000305" key="9"/>
<evidence type="ECO:0000305" key="10">
    <source>
    </source>
</evidence>
<evidence type="ECO:0000305" key="11">
    <source>
    </source>
</evidence>
<organism>
    <name type="scientific">Lupinus angustifolius</name>
    <name type="common">Narrow-leaved blue lupine</name>
    <dbReference type="NCBI Taxonomy" id="3871"/>
    <lineage>
        <taxon>Eukaryota</taxon>
        <taxon>Viridiplantae</taxon>
        <taxon>Streptophyta</taxon>
        <taxon>Embryophyta</taxon>
        <taxon>Tracheophyta</taxon>
        <taxon>Spermatophyta</taxon>
        <taxon>Magnoliopsida</taxon>
        <taxon>eudicotyledons</taxon>
        <taxon>Gunneridae</taxon>
        <taxon>Pentapetalae</taxon>
        <taxon>rosids</taxon>
        <taxon>fabids</taxon>
        <taxon>Fabales</taxon>
        <taxon>Fabaceae</taxon>
        <taxon>Papilionoideae</taxon>
        <taxon>50 kb inversion clade</taxon>
        <taxon>genistoids sensu lato</taxon>
        <taxon>core genistoids</taxon>
        <taxon>Genisteae</taxon>
        <taxon>Lupinus</taxon>
    </lineage>
</organism>
<keyword id="KW-0020">Allergen</keyword>
<keyword id="KW-1015">Disulfide bond</keyword>
<keyword id="KW-0325">Glycoprotein</keyword>
<keyword id="KW-1185">Reference proteome</keyword>
<keyword id="KW-0964">Secreted</keyword>
<keyword id="KW-0732">Signal</keyword>
<sequence>MAQNMAPIFHFIAISLSCSFLFVLSSSQDSQSLHYPLPTSSSKPSLLVLPIQQDASTGLHWANIHKRTPLMQVPVLLDLNGKHLWVTCSYHYSSSTYQAPFCHSTQCSRANSHQCFTCTDSATTRPGCHNNTCALMTSNPVTQEAGFGELAQDVLAIHSTHGSKLGPMVKVLQFLFSCAPSFLAQKGLPNNIQGALGLGHAPISLPNQLFSHFGLRRQFTMCLSRYPTSNGAILFGDIYDPNNNYIDNSVEVLLDMVYTPLGISLQGEYLMQVSAIRVNKHIVVPTKNPSMLSSNHGDSRIGGVMITTTNPYTILHHSIYEVFTQVFANNIPKQAQVEAVGPFGLCFDSKKISGGIPNVEFVMDSPDDVWRISEENLMVQAQNGVSCLGFVDGGMHTRTEIALGAHQLEENLVVFDFAKSRVEFNSNPLKSHGKTCANLFDLNNA</sequence>
<proteinExistence type="evidence at protein level"/>
<dbReference type="EMBL" id="CM007362">
    <property type="status" value="NOT_ANNOTATED_CDS"/>
    <property type="molecule type" value="Genomic_DNA"/>
</dbReference>
<dbReference type="EMBL" id="HQ670417">
    <property type="protein sequence ID" value="AEB33720.1"/>
    <property type="molecule type" value="mRNA"/>
</dbReference>
<dbReference type="RefSeq" id="NP_001413016.1">
    <property type="nucleotide sequence ID" value="NM_001426087.1"/>
</dbReference>
<dbReference type="RefSeq" id="XP_019423133.1">
    <property type="nucleotide sequence ID" value="XM_019567588.1"/>
</dbReference>
<dbReference type="SMR" id="F5B8W7"/>
<dbReference type="STRING" id="3871.F5B8W7"/>
<dbReference type="GeneID" id="109332601"/>
<dbReference type="KEGG" id="lang:109332601"/>
<dbReference type="OrthoDB" id="1258937at2759"/>
<dbReference type="Proteomes" id="UP000188354">
    <property type="component" value="Chromosome LG02"/>
</dbReference>
<dbReference type="GO" id="GO:0005576">
    <property type="term" value="C:extracellular region"/>
    <property type="evidence" value="ECO:0007669"/>
    <property type="project" value="UniProtKB-SubCell"/>
</dbReference>
<dbReference type="GO" id="GO:0004190">
    <property type="term" value="F:aspartic-type endopeptidase activity"/>
    <property type="evidence" value="ECO:0007669"/>
    <property type="project" value="InterPro"/>
</dbReference>
<dbReference type="GO" id="GO:0006508">
    <property type="term" value="P:proteolysis"/>
    <property type="evidence" value="ECO:0007669"/>
    <property type="project" value="InterPro"/>
</dbReference>
<dbReference type="CDD" id="cd05489">
    <property type="entry name" value="xylanase_inhibitor_I_like"/>
    <property type="match status" value="1"/>
</dbReference>
<dbReference type="FunFam" id="2.40.70.10:FF:000045">
    <property type="entry name" value="Basic 7S globulin"/>
    <property type="match status" value="1"/>
</dbReference>
<dbReference type="FunFam" id="2.40.70.10:FF:000126">
    <property type="entry name" value="Gamma conglutin 1"/>
    <property type="match status" value="1"/>
</dbReference>
<dbReference type="Gene3D" id="2.40.70.10">
    <property type="entry name" value="Acid Proteases"/>
    <property type="match status" value="2"/>
</dbReference>
<dbReference type="InterPro" id="IPR001461">
    <property type="entry name" value="Aspartic_peptidase_A1"/>
</dbReference>
<dbReference type="InterPro" id="IPR033121">
    <property type="entry name" value="PEPTIDASE_A1"/>
</dbReference>
<dbReference type="InterPro" id="IPR021109">
    <property type="entry name" value="Peptidase_aspartic_dom_sf"/>
</dbReference>
<dbReference type="InterPro" id="IPR032799">
    <property type="entry name" value="TAXi_C"/>
</dbReference>
<dbReference type="InterPro" id="IPR032861">
    <property type="entry name" value="TAXi_N"/>
</dbReference>
<dbReference type="InterPro" id="IPR033868">
    <property type="entry name" value="Xylanase_inhibitor_I-like"/>
</dbReference>
<dbReference type="PANTHER" id="PTHR47965">
    <property type="entry name" value="ASPARTYL PROTEASE-RELATED"/>
    <property type="match status" value="1"/>
</dbReference>
<dbReference type="PANTHER" id="PTHR47965:SF28">
    <property type="entry name" value="BASIC 7S GLOBULIN"/>
    <property type="match status" value="1"/>
</dbReference>
<dbReference type="Pfam" id="PF14541">
    <property type="entry name" value="TAXi_C"/>
    <property type="match status" value="1"/>
</dbReference>
<dbReference type="Pfam" id="PF14543">
    <property type="entry name" value="TAXi_N"/>
    <property type="match status" value="1"/>
</dbReference>
<dbReference type="SUPFAM" id="SSF50630">
    <property type="entry name" value="Acid proteases"/>
    <property type="match status" value="1"/>
</dbReference>
<dbReference type="PROSITE" id="PS51767">
    <property type="entry name" value="PEPTIDASE_A1"/>
    <property type="match status" value="1"/>
</dbReference>
<reference key="1">
    <citation type="journal article" date="2017" name="Plant Biotechnol. J.">
        <title>A comprehensive draft genome sequence for lupin (Lupinus angustifolius), an emerging health food: insights into plant-microbe interactions and legume evolution.</title>
        <authorList>
            <person name="Hane J.K."/>
            <person name="Ming Y."/>
            <person name="Kamphuis L.G."/>
            <person name="Nelson M.N."/>
            <person name="Garg G."/>
            <person name="Atkins C.A."/>
            <person name="Bayer P.E."/>
            <person name="Bravo A."/>
            <person name="Bringans S."/>
            <person name="Cannon S."/>
            <person name="Edwards D."/>
            <person name="Foley R."/>
            <person name="Gao L.L."/>
            <person name="Harrison M.J."/>
            <person name="Huang W."/>
            <person name="Hurgobin B."/>
            <person name="Li S."/>
            <person name="Liu C.W."/>
            <person name="McGrath A."/>
            <person name="Morahan G."/>
            <person name="Murray J."/>
            <person name="Weller J."/>
            <person name="Jian J."/>
            <person name="Singh K.B."/>
        </authorList>
    </citation>
    <scope>NUCLEOTIDE SEQUENCE [LARGE SCALE GENOMIC DNA]</scope>
    <source>
        <strain>cv. Tanjil</strain>
        <tissue>Seedling</tissue>
    </source>
</reference>
<reference key="2">
    <citation type="journal article" date="2011" name="BMC Plant Biol.">
        <title>Identification and characterisation of seed storage protein transcripts from Lupinus angustifolius.</title>
        <authorList>
            <person name="Foley R.C."/>
            <person name="Gao L.-L."/>
            <person name="Spriggs A."/>
            <person name="Soo L.Y.C."/>
            <person name="Goggin D.E."/>
            <person name="Smith P.M.C."/>
            <person name="Atkins C.A."/>
            <person name="Singh K.B."/>
        </authorList>
    </citation>
    <scope>NUCLEOTIDE SEQUENCE [MRNA] OF 15-445</scope>
    <scope>ALLERGEN</scope>
    <source>
        <strain>cv. Tanjil</strain>
        <tissue>Seed</tissue>
    </source>
</reference>
<reference key="3">
    <citation type="journal article" date="2012" name="J. Agric. Food Chem.">
        <title>Release of flavonoids from lupin globulin proteins during digestion in a model system.</title>
        <authorList>
            <person name="Czubinski J."/>
            <person name="Dwiecki K."/>
            <person name="Siger A."/>
            <person name="Kachlicki P."/>
            <person name="Neunert G."/>
            <person name="Lampart-Szczapa E."/>
            <person name="Nogala-Kalucka M."/>
        </authorList>
    </citation>
    <scope>SUBUNIT</scope>
    <source>
        <strain>cv. Zeus</strain>
    </source>
</reference>
<feature type="signal peptide" evidence="3">
    <location>
        <begin position="1"/>
        <end position="33"/>
    </location>
</feature>
<feature type="chain" id="PRO_0000446141" description="Gamma conglutin 2">
    <location>
        <begin position="34"/>
        <end position="445"/>
    </location>
</feature>
<feature type="chain" id="PRO_0000446142" description="Gamma conglutin 2 alpha subunit">
    <location>
        <begin position="34"/>
        <end position="293"/>
    </location>
</feature>
<feature type="chain" id="PRO_0000446143" description="Gamma conglutin 2 beta subunit">
    <location>
        <begin position="294"/>
        <end position="445"/>
    </location>
</feature>
<feature type="domain" description="Peptidase A1" evidence="5">
    <location>
        <begin position="60"/>
        <end position="425"/>
    </location>
</feature>
<feature type="site" description="Cleavage; partial" evidence="3">
    <location>
        <begin position="293"/>
        <end position="294"/>
    </location>
</feature>
<feature type="glycosylation site" description="N-linked (GlcNAc...) asparagine" evidence="4">
    <location>
        <position position="130"/>
    </location>
</feature>
<feature type="disulfide bond" evidence="1">
    <location>
        <begin position="88"/>
        <end position="178"/>
    </location>
</feature>
<feature type="disulfide bond" evidence="1">
    <location>
        <begin position="102"/>
        <end position="115"/>
    </location>
</feature>
<feature type="disulfide bond" evidence="1">
    <location>
        <begin position="107"/>
        <end position="133"/>
    </location>
</feature>
<feature type="disulfide bond" evidence="1">
    <location>
        <begin position="118"/>
        <end position="128"/>
    </location>
</feature>
<feature type="disulfide bond" description="Interchain (between alpha and beta chains, with C-436 in beta chain)" evidence="1">
    <location>
        <position position="222"/>
    </location>
</feature>
<feature type="disulfide bond" evidence="1">
    <location>
        <begin position="346"/>
        <end position="387"/>
    </location>
</feature>
<feature type="disulfide bond" description="Interchain (between alpha and beta chains, with C-222 in alpha chain)" evidence="1">
    <location>
        <position position="436"/>
    </location>
</feature>
<feature type="sequence conflict" description="In Ref. 2; AEB33720." evidence="9" ref="2">
    <original>A</original>
    <variation>P</variation>
    <location>
        <position position="156"/>
    </location>
</feature>
<accession>F5B8W7</accession>